<dbReference type="EMBL" id="CR860168">
    <property type="protein sequence ID" value="CAH92310.1"/>
    <property type="molecule type" value="mRNA"/>
</dbReference>
<dbReference type="RefSeq" id="NP_001127537.1">
    <property type="nucleotide sequence ID" value="NM_001134065.1"/>
</dbReference>
<dbReference type="RefSeq" id="XP_009248007.1">
    <property type="nucleotide sequence ID" value="XM_009249732.1"/>
</dbReference>
<dbReference type="SMR" id="Q5R7F0"/>
<dbReference type="FunCoup" id="Q5R7F0">
    <property type="interactions" value="2285"/>
</dbReference>
<dbReference type="STRING" id="9601.ENSPPYP00000007214"/>
<dbReference type="GeneID" id="100174614"/>
<dbReference type="KEGG" id="pon:100174614"/>
<dbReference type="CTD" id="11261"/>
<dbReference type="eggNOG" id="KOG0034">
    <property type="taxonomic scope" value="Eukaryota"/>
</dbReference>
<dbReference type="InParanoid" id="Q5R7F0"/>
<dbReference type="OrthoDB" id="191686at2759"/>
<dbReference type="Proteomes" id="UP000001595">
    <property type="component" value="Unplaced"/>
</dbReference>
<dbReference type="GO" id="GO:0005737">
    <property type="term" value="C:cytoplasm"/>
    <property type="evidence" value="ECO:0000250"/>
    <property type="project" value="UniProtKB"/>
</dbReference>
<dbReference type="GO" id="GO:0005783">
    <property type="term" value="C:endoplasmic reticulum"/>
    <property type="evidence" value="ECO:0000250"/>
    <property type="project" value="UniProtKB"/>
</dbReference>
<dbReference type="GO" id="GO:0005793">
    <property type="term" value="C:endoplasmic reticulum-Golgi intermediate compartment"/>
    <property type="evidence" value="ECO:0007669"/>
    <property type="project" value="UniProtKB-SubCell"/>
</dbReference>
<dbReference type="GO" id="GO:0000139">
    <property type="term" value="C:Golgi membrane"/>
    <property type="evidence" value="ECO:0000250"/>
    <property type="project" value="UniProtKB"/>
</dbReference>
<dbReference type="GO" id="GO:0015630">
    <property type="term" value="C:microtubule cytoskeleton"/>
    <property type="evidence" value="ECO:0000250"/>
    <property type="project" value="UniProtKB"/>
</dbReference>
<dbReference type="GO" id="GO:0005634">
    <property type="term" value="C:nucleus"/>
    <property type="evidence" value="ECO:0000250"/>
    <property type="project" value="UniProtKB"/>
</dbReference>
<dbReference type="GO" id="GO:0005886">
    <property type="term" value="C:plasma membrane"/>
    <property type="evidence" value="ECO:0000250"/>
    <property type="project" value="UniProtKB"/>
</dbReference>
<dbReference type="GO" id="GO:0030133">
    <property type="term" value="C:transport vesicle"/>
    <property type="evidence" value="ECO:0000250"/>
    <property type="project" value="UniProtKB"/>
</dbReference>
<dbReference type="GO" id="GO:0005509">
    <property type="term" value="F:calcium ion binding"/>
    <property type="evidence" value="ECO:0000250"/>
    <property type="project" value="UniProtKB"/>
</dbReference>
<dbReference type="GO" id="GO:0048306">
    <property type="term" value="F:calcium-dependent protein binding"/>
    <property type="evidence" value="ECO:0000250"/>
    <property type="project" value="UniProtKB"/>
</dbReference>
<dbReference type="GO" id="GO:0019900">
    <property type="term" value="F:kinase binding"/>
    <property type="evidence" value="ECO:0000250"/>
    <property type="project" value="UniProtKB"/>
</dbReference>
<dbReference type="GO" id="GO:0008017">
    <property type="term" value="F:microtubule binding"/>
    <property type="evidence" value="ECO:0000250"/>
    <property type="project" value="UniProtKB"/>
</dbReference>
<dbReference type="GO" id="GO:0004860">
    <property type="term" value="F:protein kinase inhibitor activity"/>
    <property type="evidence" value="ECO:0007669"/>
    <property type="project" value="UniProtKB-KW"/>
</dbReference>
<dbReference type="GO" id="GO:0071468">
    <property type="term" value="P:cellular response to acidic pH"/>
    <property type="evidence" value="ECO:0000250"/>
    <property type="project" value="UniProtKB"/>
</dbReference>
<dbReference type="GO" id="GO:0031122">
    <property type="term" value="P:cytoplasmic microtubule organization"/>
    <property type="evidence" value="ECO:0000250"/>
    <property type="project" value="UniProtKB"/>
</dbReference>
<dbReference type="GO" id="GO:0022406">
    <property type="term" value="P:membrane docking"/>
    <property type="evidence" value="ECO:0000250"/>
    <property type="project" value="UniProtKB"/>
</dbReference>
<dbReference type="GO" id="GO:0061025">
    <property type="term" value="P:membrane fusion"/>
    <property type="evidence" value="ECO:0000250"/>
    <property type="project" value="UniProtKB"/>
</dbReference>
<dbReference type="GO" id="GO:0061024">
    <property type="term" value="P:membrane organization"/>
    <property type="evidence" value="ECO:0000250"/>
    <property type="project" value="UniProtKB"/>
</dbReference>
<dbReference type="GO" id="GO:0001578">
    <property type="term" value="P:microtubule bundle formation"/>
    <property type="evidence" value="ECO:0000250"/>
    <property type="project" value="UniProtKB"/>
</dbReference>
<dbReference type="GO" id="GO:0070885">
    <property type="term" value="P:negative regulation of calcineurin-NFAT signaling cascade"/>
    <property type="evidence" value="ECO:0000250"/>
    <property type="project" value="UniProtKB"/>
</dbReference>
<dbReference type="GO" id="GO:0032088">
    <property type="term" value="P:negative regulation of NF-kappaB transcription factor activity"/>
    <property type="evidence" value="ECO:0000250"/>
    <property type="project" value="UniProtKB"/>
</dbReference>
<dbReference type="GO" id="GO:0010923">
    <property type="term" value="P:negative regulation of phosphatase activity"/>
    <property type="evidence" value="ECO:0000250"/>
    <property type="project" value="UniProtKB"/>
</dbReference>
<dbReference type="GO" id="GO:0031953">
    <property type="term" value="P:negative regulation of protein autophosphorylation"/>
    <property type="evidence" value="ECO:0000250"/>
    <property type="project" value="UniProtKB"/>
</dbReference>
<dbReference type="GO" id="GO:0042308">
    <property type="term" value="P:negative regulation of protein import into nucleus"/>
    <property type="evidence" value="ECO:0000250"/>
    <property type="project" value="UniProtKB"/>
</dbReference>
<dbReference type="GO" id="GO:0006469">
    <property type="term" value="P:negative regulation of protein kinase activity"/>
    <property type="evidence" value="ECO:0000250"/>
    <property type="project" value="UniProtKB"/>
</dbReference>
<dbReference type="GO" id="GO:0001933">
    <property type="term" value="P:negative regulation of protein phosphorylation"/>
    <property type="evidence" value="ECO:0000250"/>
    <property type="project" value="UniProtKB"/>
</dbReference>
<dbReference type="GO" id="GO:0031397">
    <property type="term" value="P:negative regulation of protein ubiquitination"/>
    <property type="evidence" value="ECO:0000250"/>
    <property type="project" value="UniProtKB"/>
</dbReference>
<dbReference type="GO" id="GO:0060050">
    <property type="term" value="P:positive regulation of protein glycosylation"/>
    <property type="evidence" value="ECO:0000250"/>
    <property type="project" value="UniProtKB"/>
</dbReference>
<dbReference type="GO" id="GO:0090314">
    <property type="term" value="P:positive regulation of protein targeting to membrane"/>
    <property type="evidence" value="ECO:0000250"/>
    <property type="project" value="UniProtKB"/>
</dbReference>
<dbReference type="GO" id="GO:0051222">
    <property type="term" value="P:positive regulation of protein transport"/>
    <property type="evidence" value="ECO:0000250"/>
    <property type="project" value="UniProtKB"/>
</dbReference>
<dbReference type="GO" id="GO:0032417">
    <property type="term" value="P:positive regulation of sodium:proton antiporter activity"/>
    <property type="evidence" value="ECO:0000250"/>
    <property type="project" value="UniProtKB"/>
</dbReference>
<dbReference type="GO" id="GO:0006611">
    <property type="term" value="P:protein export from nucleus"/>
    <property type="evidence" value="ECO:0000250"/>
    <property type="project" value="UniProtKB"/>
</dbReference>
<dbReference type="GO" id="GO:0050821">
    <property type="term" value="P:protein stabilization"/>
    <property type="evidence" value="ECO:0000250"/>
    <property type="project" value="UniProtKB"/>
</dbReference>
<dbReference type="GO" id="GO:0051453">
    <property type="term" value="P:regulation of intracellular pH"/>
    <property type="evidence" value="ECO:0000250"/>
    <property type="project" value="UniProtKB"/>
</dbReference>
<dbReference type="CDD" id="cd00051">
    <property type="entry name" value="EFh"/>
    <property type="match status" value="1"/>
</dbReference>
<dbReference type="FunFam" id="1.10.238.10:FF:000093">
    <property type="entry name" value="Calcineurin B homologous protein 1"/>
    <property type="match status" value="1"/>
</dbReference>
<dbReference type="Gene3D" id="1.10.238.10">
    <property type="entry name" value="EF-hand"/>
    <property type="match status" value="1"/>
</dbReference>
<dbReference type="InterPro" id="IPR051875">
    <property type="entry name" value="Calcineurin_B_homologous"/>
</dbReference>
<dbReference type="InterPro" id="IPR011992">
    <property type="entry name" value="EF-hand-dom_pair"/>
</dbReference>
<dbReference type="InterPro" id="IPR002048">
    <property type="entry name" value="EF_hand_dom"/>
</dbReference>
<dbReference type="PANTHER" id="PTHR46002">
    <property type="entry name" value="EG:114D9.1 PROTEIN-RELATED"/>
    <property type="match status" value="1"/>
</dbReference>
<dbReference type="Pfam" id="PF13499">
    <property type="entry name" value="EF-hand_7"/>
    <property type="match status" value="1"/>
</dbReference>
<dbReference type="SMART" id="SM00054">
    <property type="entry name" value="EFh"/>
    <property type="match status" value="2"/>
</dbReference>
<dbReference type="SUPFAM" id="SSF47473">
    <property type="entry name" value="EF-hand"/>
    <property type="match status" value="1"/>
</dbReference>
<dbReference type="PROSITE" id="PS50222">
    <property type="entry name" value="EF_HAND_2"/>
    <property type="match status" value="3"/>
</dbReference>
<gene>
    <name type="primary">CHP1</name>
    <name type="synonym">CHP</name>
</gene>
<organism>
    <name type="scientific">Pongo abelii</name>
    <name type="common">Sumatran orangutan</name>
    <name type="synonym">Pongo pygmaeus abelii</name>
    <dbReference type="NCBI Taxonomy" id="9601"/>
    <lineage>
        <taxon>Eukaryota</taxon>
        <taxon>Metazoa</taxon>
        <taxon>Chordata</taxon>
        <taxon>Craniata</taxon>
        <taxon>Vertebrata</taxon>
        <taxon>Euteleostomi</taxon>
        <taxon>Mammalia</taxon>
        <taxon>Eutheria</taxon>
        <taxon>Euarchontoglires</taxon>
        <taxon>Primates</taxon>
        <taxon>Haplorrhini</taxon>
        <taxon>Catarrhini</taxon>
        <taxon>Hominidae</taxon>
        <taxon>Pongo</taxon>
    </lineage>
</organism>
<proteinExistence type="evidence at transcript level"/>
<feature type="initiator methionine" description="Removed" evidence="3">
    <location>
        <position position="1"/>
    </location>
</feature>
<feature type="chain" id="PRO_0000073845" description="Calcineurin B homologous protein 1">
    <location>
        <begin position="2"/>
        <end position="195"/>
    </location>
</feature>
<feature type="domain" description="EF-hand 1" evidence="4">
    <location>
        <begin position="26"/>
        <end position="61"/>
    </location>
</feature>
<feature type="domain" description="EF-hand 2" evidence="5">
    <location>
        <begin position="66"/>
        <end position="101"/>
    </location>
</feature>
<feature type="domain" description="EF-hand 3" evidence="4">
    <location>
        <begin position="110"/>
        <end position="145"/>
    </location>
</feature>
<feature type="domain" description="EF-hand 4" evidence="4">
    <location>
        <begin position="151"/>
        <end position="186"/>
    </location>
</feature>
<feature type="short sequence motif" description="Necessary for association with microtubule and interaction with GAPDH" evidence="1">
    <location>
        <begin position="2"/>
        <end position="6"/>
    </location>
</feature>
<feature type="short sequence motif" description="Nuclear export signal 1" evidence="1">
    <location>
        <begin position="138"/>
        <end position="147"/>
    </location>
</feature>
<feature type="short sequence motif" description="Nuclear export signal 2" evidence="1">
    <location>
        <begin position="176"/>
        <end position="185"/>
    </location>
</feature>
<feature type="binding site" evidence="5">
    <location>
        <position position="123"/>
    </location>
    <ligand>
        <name>Ca(2+)</name>
        <dbReference type="ChEBI" id="CHEBI:29108"/>
        <label>1</label>
    </ligand>
</feature>
<feature type="binding site" evidence="5">
    <location>
        <position position="125"/>
    </location>
    <ligand>
        <name>Ca(2+)</name>
        <dbReference type="ChEBI" id="CHEBI:29108"/>
        <label>1</label>
    </ligand>
</feature>
<feature type="binding site" evidence="5">
    <location>
        <position position="127"/>
    </location>
    <ligand>
        <name>Ca(2+)</name>
        <dbReference type="ChEBI" id="CHEBI:29108"/>
        <label>1</label>
    </ligand>
</feature>
<feature type="binding site" evidence="5">
    <location>
        <position position="129"/>
    </location>
    <ligand>
        <name>Ca(2+)</name>
        <dbReference type="ChEBI" id="CHEBI:29108"/>
        <label>1</label>
    </ligand>
</feature>
<feature type="binding site" evidence="5">
    <location>
        <position position="134"/>
    </location>
    <ligand>
        <name>Ca(2+)</name>
        <dbReference type="ChEBI" id="CHEBI:29108"/>
        <label>1</label>
    </ligand>
</feature>
<feature type="binding site" evidence="5">
    <location>
        <position position="164"/>
    </location>
    <ligand>
        <name>Ca(2+)</name>
        <dbReference type="ChEBI" id="CHEBI:29108"/>
        <label>2</label>
    </ligand>
</feature>
<feature type="binding site" evidence="5">
    <location>
        <position position="166"/>
    </location>
    <ligand>
        <name>Ca(2+)</name>
        <dbReference type="ChEBI" id="CHEBI:29108"/>
        <label>2</label>
    </ligand>
</feature>
<feature type="binding site" evidence="5">
    <location>
        <position position="168"/>
    </location>
    <ligand>
        <name>Ca(2+)</name>
        <dbReference type="ChEBI" id="CHEBI:29108"/>
        <label>2</label>
    </ligand>
</feature>
<feature type="binding site" evidence="5">
    <location>
        <position position="175"/>
    </location>
    <ligand>
        <name>Ca(2+)</name>
        <dbReference type="ChEBI" id="CHEBI:29108"/>
        <label>2</label>
    </ligand>
</feature>
<feature type="lipid moiety-binding region" description="N-myristoyl glycine" evidence="3">
    <location>
        <position position="2"/>
    </location>
</feature>
<accession>Q5R7F0</accession>
<keyword id="KW-0106">Calcium</keyword>
<keyword id="KW-1003">Cell membrane</keyword>
<keyword id="KW-0963">Cytoplasm</keyword>
<keyword id="KW-0206">Cytoskeleton</keyword>
<keyword id="KW-0256">Endoplasmic reticulum</keyword>
<keyword id="KW-0449">Lipoprotein</keyword>
<keyword id="KW-0472">Membrane</keyword>
<keyword id="KW-0479">Metal-binding</keyword>
<keyword id="KW-0519">Myristate</keyword>
<keyword id="KW-0539">Nucleus</keyword>
<keyword id="KW-0597">Phosphoprotein</keyword>
<keyword id="KW-0649">Protein kinase inhibitor</keyword>
<keyword id="KW-0653">Protein transport</keyword>
<keyword id="KW-1185">Reference proteome</keyword>
<keyword id="KW-0677">Repeat</keyword>
<keyword id="KW-0813">Transport</keyword>
<reference key="1">
    <citation type="submission" date="2004-11" db="EMBL/GenBank/DDBJ databases">
        <authorList>
            <consortium name="The German cDNA consortium"/>
        </authorList>
    </citation>
    <scope>NUCLEOTIDE SEQUENCE [LARGE SCALE MRNA]</scope>
    <source>
        <tissue>Brain cortex</tissue>
    </source>
</reference>
<name>CHP1_PONAB</name>
<protein>
    <recommendedName>
        <fullName>Calcineurin B homologous protein 1</fullName>
    </recommendedName>
    <alternativeName>
        <fullName>Calcineurin B-like protein</fullName>
    </alternativeName>
    <alternativeName>
        <fullName>Calcium-binding protein CHP</fullName>
    </alternativeName>
    <alternativeName>
        <fullName>Calcium-binding protein p22</fullName>
    </alternativeName>
    <alternativeName>
        <fullName>EF-hand calcium-binding domain-containing protein p22</fullName>
    </alternativeName>
</protein>
<evidence type="ECO:0000250" key="1"/>
<evidence type="ECO:0000250" key="2">
    <source>
        <dbReference type="UniProtKB" id="P61023"/>
    </source>
</evidence>
<evidence type="ECO:0000250" key="3">
    <source>
        <dbReference type="UniProtKB" id="Q99653"/>
    </source>
</evidence>
<evidence type="ECO:0000255" key="4">
    <source>
        <dbReference type="PROSITE-ProRule" id="PRU00448"/>
    </source>
</evidence>
<evidence type="ECO:0000305" key="5"/>
<comment type="function">
    <text evidence="3">Calcium-binding protein involved in different processes such as regulation of vesicular trafficking, plasma membrane Na(+)/H(+) exchanger and gene transcription. Involved in the constitutive exocytic membrane traffic. Mediates the association between microtubules and membrane-bound organelles of the endoplasmic reticulum and Golgi apparatus and is also required for the targeting and fusion of transcytotic vesicles (TCV) with the plasma membrane. Functions as an integral cofactor in cell pH regulation by controlling plasma membrane-type Na(+)/H(+) exchange activity. Affects the pH sensitivity of SLC9A1/NHE1 by increasing its sensitivity at acidic pH. Required for the stabilization and localization of SLC9A1/NHE1 at the plasma membrane. Inhibits serum- and GTPase-stimulated Na(+)/H(+) exchange. Plays a role as an inhibitor of ribosomal RNA transcription by repressing the nucleolar UBF1 transcriptional activity. May sequester UBF1 in the nucleoplasm and limit its translocation to the nucleolus. Associates to the ribosomal gene promoter. Acts as a negative regulator of the calcineurin/NFAT signaling pathway. Inhibits NFAT nuclear translocation and transcriptional activity by suppressing the calcium-dependent calcineurin phosphatase activity. Also negatively regulates the kinase activity of the apoptosis-induced kinase STK17B. Inhibits both STK17B auto- and substrate-phosphorylations in a calcium-dependent manner (By similarity).</text>
</comment>
<comment type="subunit">
    <text evidence="3">Monomer. Interacts with STK17B; the interaction occurs in a calcium-independent manner and induces the translocation of CHP1 from the Golgi to the nucleus. Interacts with GAPDH; the interaction is direct, occurs in a N-myristoylation-dependent manner and facilitates the ability of CHP1 to bind microtubules. Interacts with KIF1B (via the C-terminal end of the kinesin-motor domain); the interaction occurs in a calcium-dependent manner. Associates (via C-terminal domain) with microtubules; the association occurs with polymerized microtubules during the cell cycle in a myristoylation- and calcium-independent manner and is enhanced by GAPDH. Interacts with PPP3CA. Interacts with SLC9A1/NHE1 (via the cytoplasmic C-terminal domain); the interaction occurs at the plasma membrane in a calcium-dependent manner and at a domain that is critical for growth factor stimulation of the exchanger (By similarity). Interacts with SLC9A3; increases SLC9A3 trafficking and activity at the plasma membrane (By similarity).</text>
</comment>
<comment type="subcellular location">
    <subcellularLocation>
        <location evidence="2">Nucleus</location>
    </subcellularLocation>
    <subcellularLocation>
        <location evidence="2">Cytoplasm</location>
    </subcellularLocation>
    <subcellularLocation>
        <location evidence="2">Cytoplasm</location>
        <location evidence="2">Cytoskeleton</location>
    </subcellularLocation>
    <subcellularLocation>
        <location evidence="2">Endomembrane system</location>
    </subcellularLocation>
    <subcellularLocation>
        <location evidence="2">Endoplasmic reticulum-Golgi intermediate compartment</location>
    </subcellularLocation>
    <subcellularLocation>
        <location evidence="2">Endoplasmic reticulum</location>
    </subcellularLocation>
    <subcellularLocation>
        <location evidence="2">Cell membrane</location>
    </subcellularLocation>
    <subcellularLocation>
        <location evidence="3">Membrane</location>
        <topology evidence="3">Lipid-anchor</topology>
    </subcellularLocation>
    <text evidence="2">Localizes in cytoplasmic compartments in dividing cells. Localizes in the nucleus in quiescent cells. Exported from the nucleus to the cytoplasm through a nuclear export signal (NES) and CRM1-dependent pathway. May shuttle between nucleus and cytoplasm. Localizes with the microtubule-organizing center (MTOC) and extends toward the periphery along microtubules. Associates with membranes of the early secretory pathway in a GAPDH-independent, N-myristoylation- and calcium-dependent manner. Colocalizes with the mitotic spindle microtubules. Colocalizes with GAPDH along microtubules. Colocalizes with SLC9A1 at the endoplasmic reticulum and plasma membrane. Colocalizes with STK17B at the plasma membrane.</text>
</comment>
<comment type="PTM">
    <text evidence="1">Phosphorylated; decreased phosphorylation is associated with an increase in SLC9A1/NHE1 Na(+)/H(+) exchange activity. Phosphorylation occurs in serum-dependent manner. The phosphorylation state may regulate the binding to SLC9A1/NHE1 (By similarity).</text>
</comment>
<comment type="PTM">
    <text evidence="1">Both N-myristoylation and calcium-mediated conformational changes are essential for its function in exocytic traffic. N-myristoylation is required for its association with microtubules and interaction with GAPDH, but not for the constitutive association to membranes (By similarity).</text>
</comment>
<comment type="similarity">
    <text evidence="5">Belongs to the calcineurin regulatory subunit family. CHP subfamily.</text>
</comment>
<sequence length="195" mass="22456">MGSRASTLLRDEELEEIKKETGFSHSQITRLYSRFTSLDKGENGTLSREDFQRIPELAINPLGDRIINAFFPEGEDQVNFRGFMRTLAHFRPIEDNEKSKDVNGPEPLNSRSNKLHFAFRLYDLDKDEKISRDELLQVLRMMVGVNISDEQLGSIADRTIQEADQDGDSAISFTEFVKVLEKVDVEQKMSIRFLH</sequence>